<proteinExistence type="inferred from homology"/>
<name>DAPB_AERS4</name>
<protein>
    <recommendedName>
        <fullName evidence="1">4-hydroxy-tetrahydrodipicolinate reductase</fullName>
        <shortName evidence="1">HTPA reductase</shortName>
        <ecNumber evidence="1">1.17.1.8</ecNumber>
    </recommendedName>
</protein>
<feature type="chain" id="PRO_1000093940" description="4-hydroxy-tetrahydrodipicolinate reductase">
    <location>
        <begin position="1"/>
        <end position="270"/>
    </location>
</feature>
<feature type="active site" description="Proton donor/acceptor" evidence="1">
    <location>
        <position position="158"/>
    </location>
</feature>
<feature type="active site" description="Proton donor" evidence="1">
    <location>
        <position position="162"/>
    </location>
</feature>
<feature type="binding site" evidence="1">
    <location>
        <begin position="11"/>
        <end position="16"/>
    </location>
    <ligand>
        <name>NAD(+)</name>
        <dbReference type="ChEBI" id="CHEBI:57540"/>
    </ligand>
</feature>
<feature type="binding site" evidence="1">
    <location>
        <position position="37"/>
    </location>
    <ligand>
        <name>NAD(+)</name>
        <dbReference type="ChEBI" id="CHEBI:57540"/>
    </ligand>
</feature>
<feature type="binding site" evidence="1">
    <location>
        <position position="38"/>
    </location>
    <ligand>
        <name>NADP(+)</name>
        <dbReference type="ChEBI" id="CHEBI:58349"/>
    </ligand>
</feature>
<feature type="binding site" evidence="1">
    <location>
        <begin position="101"/>
        <end position="103"/>
    </location>
    <ligand>
        <name>NAD(+)</name>
        <dbReference type="ChEBI" id="CHEBI:57540"/>
    </ligand>
</feature>
<feature type="binding site" evidence="1">
    <location>
        <begin position="125"/>
        <end position="128"/>
    </location>
    <ligand>
        <name>NAD(+)</name>
        <dbReference type="ChEBI" id="CHEBI:57540"/>
    </ligand>
</feature>
<feature type="binding site" evidence="1">
    <location>
        <position position="159"/>
    </location>
    <ligand>
        <name>(S)-2,3,4,5-tetrahydrodipicolinate</name>
        <dbReference type="ChEBI" id="CHEBI:16845"/>
    </ligand>
</feature>
<feature type="binding site" evidence="1">
    <location>
        <begin position="168"/>
        <end position="169"/>
    </location>
    <ligand>
        <name>(S)-2,3,4,5-tetrahydrodipicolinate</name>
        <dbReference type="ChEBI" id="CHEBI:16845"/>
    </ligand>
</feature>
<keyword id="KW-0028">Amino-acid biosynthesis</keyword>
<keyword id="KW-0963">Cytoplasm</keyword>
<keyword id="KW-0220">Diaminopimelate biosynthesis</keyword>
<keyword id="KW-0457">Lysine biosynthesis</keyword>
<keyword id="KW-0520">NAD</keyword>
<keyword id="KW-0521">NADP</keyword>
<keyword id="KW-0560">Oxidoreductase</keyword>
<accession>A4SLF8</accession>
<comment type="function">
    <text evidence="1">Catalyzes the conversion of 4-hydroxy-tetrahydrodipicolinate (HTPA) to tetrahydrodipicolinate.</text>
</comment>
<comment type="catalytic activity">
    <reaction evidence="1">
        <text>(S)-2,3,4,5-tetrahydrodipicolinate + NAD(+) + H2O = (2S,4S)-4-hydroxy-2,3,4,5-tetrahydrodipicolinate + NADH + H(+)</text>
        <dbReference type="Rhea" id="RHEA:35323"/>
        <dbReference type="ChEBI" id="CHEBI:15377"/>
        <dbReference type="ChEBI" id="CHEBI:15378"/>
        <dbReference type="ChEBI" id="CHEBI:16845"/>
        <dbReference type="ChEBI" id="CHEBI:57540"/>
        <dbReference type="ChEBI" id="CHEBI:57945"/>
        <dbReference type="ChEBI" id="CHEBI:67139"/>
        <dbReference type="EC" id="1.17.1.8"/>
    </reaction>
</comment>
<comment type="catalytic activity">
    <reaction evidence="1">
        <text>(S)-2,3,4,5-tetrahydrodipicolinate + NADP(+) + H2O = (2S,4S)-4-hydroxy-2,3,4,5-tetrahydrodipicolinate + NADPH + H(+)</text>
        <dbReference type="Rhea" id="RHEA:35331"/>
        <dbReference type="ChEBI" id="CHEBI:15377"/>
        <dbReference type="ChEBI" id="CHEBI:15378"/>
        <dbReference type="ChEBI" id="CHEBI:16845"/>
        <dbReference type="ChEBI" id="CHEBI:57783"/>
        <dbReference type="ChEBI" id="CHEBI:58349"/>
        <dbReference type="ChEBI" id="CHEBI:67139"/>
        <dbReference type="EC" id="1.17.1.8"/>
    </reaction>
</comment>
<comment type="pathway">
    <text evidence="1">Amino-acid biosynthesis; L-lysine biosynthesis via DAP pathway; (S)-tetrahydrodipicolinate from L-aspartate: step 4/4.</text>
</comment>
<comment type="subcellular location">
    <subcellularLocation>
        <location evidence="1">Cytoplasm</location>
    </subcellularLocation>
</comment>
<comment type="similarity">
    <text evidence="1">Belongs to the DapB family.</text>
</comment>
<comment type="caution">
    <text evidence="2">Was originally thought to be a dihydrodipicolinate reductase (DHDPR), catalyzing the conversion of dihydrodipicolinate to tetrahydrodipicolinate. However, it was shown in E.coli that the substrate of the enzymatic reaction is not dihydrodipicolinate (DHDP) but in fact (2S,4S)-4-hydroxy-2,3,4,5-tetrahydrodipicolinic acid (HTPA), the product released by the DapA-catalyzed reaction.</text>
</comment>
<organism>
    <name type="scientific">Aeromonas salmonicida (strain A449)</name>
    <dbReference type="NCBI Taxonomy" id="382245"/>
    <lineage>
        <taxon>Bacteria</taxon>
        <taxon>Pseudomonadati</taxon>
        <taxon>Pseudomonadota</taxon>
        <taxon>Gammaproteobacteria</taxon>
        <taxon>Aeromonadales</taxon>
        <taxon>Aeromonadaceae</taxon>
        <taxon>Aeromonas</taxon>
    </lineage>
</organism>
<dbReference type="EC" id="1.17.1.8" evidence="1"/>
<dbReference type="EMBL" id="CP000644">
    <property type="protein sequence ID" value="ABO89730.1"/>
    <property type="molecule type" value="Genomic_DNA"/>
</dbReference>
<dbReference type="RefSeq" id="WP_005314633.1">
    <property type="nucleotide sequence ID" value="NC_009348.1"/>
</dbReference>
<dbReference type="SMR" id="A4SLF8"/>
<dbReference type="STRING" id="29491.GCA_000820065_00406"/>
<dbReference type="KEGG" id="asa:ASA_1647"/>
<dbReference type="eggNOG" id="COG0289">
    <property type="taxonomic scope" value="Bacteria"/>
</dbReference>
<dbReference type="HOGENOM" id="CLU_047479_2_1_6"/>
<dbReference type="UniPathway" id="UPA00034">
    <property type="reaction ID" value="UER00018"/>
</dbReference>
<dbReference type="Proteomes" id="UP000000225">
    <property type="component" value="Chromosome"/>
</dbReference>
<dbReference type="GO" id="GO:0005829">
    <property type="term" value="C:cytosol"/>
    <property type="evidence" value="ECO:0007669"/>
    <property type="project" value="TreeGrafter"/>
</dbReference>
<dbReference type="GO" id="GO:0008839">
    <property type="term" value="F:4-hydroxy-tetrahydrodipicolinate reductase"/>
    <property type="evidence" value="ECO:0007669"/>
    <property type="project" value="UniProtKB-EC"/>
</dbReference>
<dbReference type="GO" id="GO:0051287">
    <property type="term" value="F:NAD binding"/>
    <property type="evidence" value="ECO:0007669"/>
    <property type="project" value="UniProtKB-UniRule"/>
</dbReference>
<dbReference type="GO" id="GO:0050661">
    <property type="term" value="F:NADP binding"/>
    <property type="evidence" value="ECO:0007669"/>
    <property type="project" value="UniProtKB-UniRule"/>
</dbReference>
<dbReference type="GO" id="GO:0016726">
    <property type="term" value="F:oxidoreductase activity, acting on CH or CH2 groups, NAD or NADP as acceptor"/>
    <property type="evidence" value="ECO:0007669"/>
    <property type="project" value="UniProtKB-UniRule"/>
</dbReference>
<dbReference type="GO" id="GO:0019877">
    <property type="term" value="P:diaminopimelate biosynthetic process"/>
    <property type="evidence" value="ECO:0007669"/>
    <property type="project" value="UniProtKB-UniRule"/>
</dbReference>
<dbReference type="GO" id="GO:0009089">
    <property type="term" value="P:lysine biosynthetic process via diaminopimelate"/>
    <property type="evidence" value="ECO:0007669"/>
    <property type="project" value="UniProtKB-UniRule"/>
</dbReference>
<dbReference type="CDD" id="cd02274">
    <property type="entry name" value="DHDPR_N"/>
    <property type="match status" value="1"/>
</dbReference>
<dbReference type="FunFam" id="3.30.360.10:FF:000004">
    <property type="entry name" value="4-hydroxy-tetrahydrodipicolinate reductase"/>
    <property type="match status" value="1"/>
</dbReference>
<dbReference type="FunFam" id="3.40.50.720:FF:000048">
    <property type="entry name" value="4-hydroxy-tetrahydrodipicolinate reductase"/>
    <property type="match status" value="1"/>
</dbReference>
<dbReference type="Gene3D" id="3.30.360.10">
    <property type="entry name" value="Dihydrodipicolinate Reductase, domain 2"/>
    <property type="match status" value="1"/>
</dbReference>
<dbReference type="Gene3D" id="3.40.50.720">
    <property type="entry name" value="NAD(P)-binding Rossmann-like Domain"/>
    <property type="match status" value="1"/>
</dbReference>
<dbReference type="HAMAP" id="MF_00102">
    <property type="entry name" value="DapB"/>
    <property type="match status" value="1"/>
</dbReference>
<dbReference type="InterPro" id="IPR022663">
    <property type="entry name" value="DapB_C"/>
</dbReference>
<dbReference type="InterPro" id="IPR000846">
    <property type="entry name" value="DapB_N"/>
</dbReference>
<dbReference type="InterPro" id="IPR022664">
    <property type="entry name" value="DapB_N_CS"/>
</dbReference>
<dbReference type="InterPro" id="IPR023940">
    <property type="entry name" value="DHDPR_bac"/>
</dbReference>
<dbReference type="InterPro" id="IPR036291">
    <property type="entry name" value="NAD(P)-bd_dom_sf"/>
</dbReference>
<dbReference type="NCBIfam" id="TIGR00036">
    <property type="entry name" value="dapB"/>
    <property type="match status" value="1"/>
</dbReference>
<dbReference type="PANTHER" id="PTHR20836:SF0">
    <property type="entry name" value="4-HYDROXY-TETRAHYDRODIPICOLINATE REDUCTASE 1, CHLOROPLASTIC-RELATED"/>
    <property type="match status" value="1"/>
</dbReference>
<dbReference type="PANTHER" id="PTHR20836">
    <property type="entry name" value="DIHYDRODIPICOLINATE REDUCTASE"/>
    <property type="match status" value="1"/>
</dbReference>
<dbReference type="Pfam" id="PF05173">
    <property type="entry name" value="DapB_C"/>
    <property type="match status" value="1"/>
</dbReference>
<dbReference type="Pfam" id="PF01113">
    <property type="entry name" value="DapB_N"/>
    <property type="match status" value="1"/>
</dbReference>
<dbReference type="PIRSF" id="PIRSF000161">
    <property type="entry name" value="DHPR"/>
    <property type="match status" value="1"/>
</dbReference>
<dbReference type="SUPFAM" id="SSF55347">
    <property type="entry name" value="Glyceraldehyde-3-phosphate dehydrogenase-like, C-terminal domain"/>
    <property type="match status" value="1"/>
</dbReference>
<dbReference type="SUPFAM" id="SSF51735">
    <property type="entry name" value="NAD(P)-binding Rossmann-fold domains"/>
    <property type="match status" value="1"/>
</dbReference>
<dbReference type="PROSITE" id="PS01298">
    <property type="entry name" value="DAPB"/>
    <property type="match status" value="1"/>
</dbReference>
<evidence type="ECO:0000255" key="1">
    <source>
        <dbReference type="HAMAP-Rule" id="MF_00102"/>
    </source>
</evidence>
<evidence type="ECO:0000305" key="2"/>
<reference key="1">
    <citation type="journal article" date="2008" name="BMC Genomics">
        <title>The genome of Aeromonas salmonicida subsp. salmonicida A449: insights into the evolution of a fish pathogen.</title>
        <authorList>
            <person name="Reith M.E."/>
            <person name="Singh R.K."/>
            <person name="Curtis B."/>
            <person name="Boyd J.M."/>
            <person name="Bouevitch A."/>
            <person name="Kimball J."/>
            <person name="Munholland J."/>
            <person name="Murphy C."/>
            <person name="Sarty D."/>
            <person name="Williams J."/>
            <person name="Nash J.H."/>
            <person name="Johnson S.C."/>
            <person name="Brown L.L."/>
        </authorList>
    </citation>
    <scope>NUCLEOTIDE SEQUENCE [LARGE SCALE GENOMIC DNA]</scope>
    <source>
        <strain>A449</strain>
    </source>
</reference>
<gene>
    <name evidence="1" type="primary">dapB</name>
    <name type="ordered locus">ASA_1647</name>
</gene>
<sequence>MDNPIRVAVMGCNGRMGKVLLEAITNADGVVVGAALERPGSAVIGLDAGELNGLGKLGVMISDSLDKVRDEFDLIIDFTRPEVTLANLAFALAHQKQMVIGTTGFDDAGKAALKEAGKQIGIVFASNYSVGVNLVFKLLEQAAKVMGDYTDIEIIEGHHRHKVDAPSGTALSMGEVVAKTLGRDLKECAVYGREGITGERDRNTIGFATIRAGDMVGEHTVMFADIGERVEISHKASSRLTFANGAVRAGKWLGQQGAGLYDMQDVLSLK</sequence>